<organism>
    <name type="scientific">Aliivibrio salmonicida (strain LFI1238)</name>
    <name type="common">Vibrio salmonicida (strain LFI1238)</name>
    <dbReference type="NCBI Taxonomy" id="316275"/>
    <lineage>
        <taxon>Bacteria</taxon>
        <taxon>Pseudomonadati</taxon>
        <taxon>Pseudomonadota</taxon>
        <taxon>Gammaproteobacteria</taxon>
        <taxon>Vibrionales</taxon>
        <taxon>Vibrionaceae</taxon>
        <taxon>Aliivibrio</taxon>
    </lineage>
</organism>
<comment type="function">
    <text evidence="1">Produces ATP from ADP in the presence of a proton gradient across the membrane. The gamma chain is believed to be important in regulating ATPase activity and the flow of protons through the CF(0) complex.</text>
</comment>
<comment type="subunit">
    <text evidence="1">F-type ATPases have 2 components, CF(1) - the catalytic core - and CF(0) - the membrane proton channel. CF(1) has five subunits: alpha(3), beta(3), gamma(1), delta(1), epsilon(1). CF(0) has three main subunits: a, b and c.</text>
</comment>
<comment type="subcellular location">
    <subcellularLocation>
        <location evidence="1">Cell inner membrane</location>
        <topology evidence="1">Peripheral membrane protein</topology>
    </subcellularLocation>
</comment>
<comment type="similarity">
    <text evidence="1">Belongs to the ATPase gamma chain family.</text>
</comment>
<gene>
    <name evidence="1" type="primary">atpG</name>
    <name type="ordered locus">VSAL_I3060</name>
</gene>
<sequence>MAGAKEIRSKIGSVKSTQKITKAMEMVAASKMRRSQESMAASRPYADTMRKVIGHLALGNLEYRHPYLEEREAKRVGYIIISSDRGLCGGLNINLFKKVMAGMKTWSEDGVEIDLAVIGSKATAFFNSYGGNVIAQNSGLGDKPSLEELIGTVGVMLKKYDEGQLDRLYVVNNKFINTMVQEPTIDQLLPLPKSEDEAMKRTHAWDYIYEPEPKPLLDALLIRYVESQVYQGVVENLACEHVARMIAMKAATDNAGDIIDELQLVYNKARQSAITQELSEIVSGASAV</sequence>
<proteinExistence type="inferred from homology"/>
<reference key="1">
    <citation type="journal article" date="2008" name="BMC Genomics">
        <title>The genome sequence of the fish pathogen Aliivibrio salmonicida strain LFI1238 shows extensive evidence of gene decay.</title>
        <authorList>
            <person name="Hjerde E."/>
            <person name="Lorentzen M.S."/>
            <person name="Holden M.T."/>
            <person name="Seeger K."/>
            <person name="Paulsen S."/>
            <person name="Bason N."/>
            <person name="Churcher C."/>
            <person name="Harris D."/>
            <person name="Norbertczak H."/>
            <person name="Quail M.A."/>
            <person name="Sanders S."/>
            <person name="Thurston S."/>
            <person name="Parkhill J."/>
            <person name="Willassen N.P."/>
            <person name="Thomson N.R."/>
        </authorList>
    </citation>
    <scope>NUCLEOTIDE SEQUENCE [LARGE SCALE GENOMIC DNA]</scope>
    <source>
        <strain>LFI1238</strain>
    </source>
</reference>
<dbReference type="EMBL" id="FM178379">
    <property type="protein sequence ID" value="CAQ80744.1"/>
    <property type="molecule type" value="Genomic_DNA"/>
</dbReference>
<dbReference type="RefSeq" id="WP_012551443.1">
    <property type="nucleotide sequence ID" value="NC_011312.1"/>
</dbReference>
<dbReference type="SMR" id="B6EHG5"/>
<dbReference type="KEGG" id="vsa:VSAL_I3060"/>
<dbReference type="eggNOG" id="COG0224">
    <property type="taxonomic scope" value="Bacteria"/>
</dbReference>
<dbReference type="HOGENOM" id="CLU_050669_0_1_6"/>
<dbReference type="Proteomes" id="UP000001730">
    <property type="component" value="Chromosome 1"/>
</dbReference>
<dbReference type="GO" id="GO:0005886">
    <property type="term" value="C:plasma membrane"/>
    <property type="evidence" value="ECO:0007669"/>
    <property type="project" value="UniProtKB-SubCell"/>
</dbReference>
<dbReference type="GO" id="GO:0045259">
    <property type="term" value="C:proton-transporting ATP synthase complex"/>
    <property type="evidence" value="ECO:0007669"/>
    <property type="project" value="UniProtKB-KW"/>
</dbReference>
<dbReference type="GO" id="GO:0005524">
    <property type="term" value="F:ATP binding"/>
    <property type="evidence" value="ECO:0007669"/>
    <property type="project" value="UniProtKB-UniRule"/>
</dbReference>
<dbReference type="GO" id="GO:0046933">
    <property type="term" value="F:proton-transporting ATP synthase activity, rotational mechanism"/>
    <property type="evidence" value="ECO:0007669"/>
    <property type="project" value="UniProtKB-UniRule"/>
</dbReference>
<dbReference type="GO" id="GO:0042777">
    <property type="term" value="P:proton motive force-driven plasma membrane ATP synthesis"/>
    <property type="evidence" value="ECO:0007669"/>
    <property type="project" value="UniProtKB-UniRule"/>
</dbReference>
<dbReference type="CDD" id="cd12151">
    <property type="entry name" value="F1-ATPase_gamma"/>
    <property type="match status" value="1"/>
</dbReference>
<dbReference type="FunFam" id="1.10.287.80:FF:000005">
    <property type="entry name" value="ATP synthase gamma chain"/>
    <property type="match status" value="2"/>
</dbReference>
<dbReference type="FunFam" id="3.40.1380.10:FF:000001">
    <property type="entry name" value="ATP synthase gamma chain"/>
    <property type="match status" value="1"/>
</dbReference>
<dbReference type="Gene3D" id="3.40.1380.10">
    <property type="match status" value="1"/>
</dbReference>
<dbReference type="Gene3D" id="1.10.287.80">
    <property type="entry name" value="ATP synthase, gamma subunit, helix hairpin domain"/>
    <property type="match status" value="1"/>
</dbReference>
<dbReference type="HAMAP" id="MF_00815">
    <property type="entry name" value="ATP_synth_gamma_bact"/>
    <property type="match status" value="1"/>
</dbReference>
<dbReference type="InterPro" id="IPR035968">
    <property type="entry name" value="ATP_synth_F1_ATPase_gsu"/>
</dbReference>
<dbReference type="InterPro" id="IPR000131">
    <property type="entry name" value="ATP_synth_F1_gsu"/>
</dbReference>
<dbReference type="InterPro" id="IPR023632">
    <property type="entry name" value="ATP_synth_F1_gsu_CS"/>
</dbReference>
<dbReference type="NCBIfam" id="TIGR01146">
    <property type="entry name" value="ATPsyn_F1gamma"/>
    <property type="match status" value="1"/>
</dbReference>
<dbReference type="NCBIfam" id="NF004144">
    <property type="entry name" value="PRK05621.1-1"/>
    <property type="match status" value="1"/>
</dbReference>
<dbReference type="PANTHER" id="PTHR11693">
    <property type="entry name" value="ATP SYNTHASE GAMMA CHAIN"/>
    <property type="match status" value="1"/>
</dbReference>
<dbReference type="PANTHER" id="PTHR11693:SF22">
    <property type="entry name" value="ATP SYNTHASE SUBUNIT GAMMA, MITOCHONDRIAL"/>
    <property type="match status" value="1"/>
</dbReference>
<dbReference type="Pfam" id="PF00231">
    <property type="entry name" value="ATP-synt"/>
    <property type="match status" value="1"/>
</dbReference>
<dbReference type="PRINTS" id="PR00126">
    <property type="entry name" value="ATPASEGAMMA"/>
</dbReference>
<dbReference type="SUPFAM" id="SSF52943">
    <property type="entry name" value="ATP synthase (F1-ATPase), gamma subunit"/>
    <property type="match status" value="1"/>
</dbReference>
<dbReference type="PROSITE" id="PS00153">
    <property type="entry name" value="ATPASE_GAMMA"/>
    <property type="match status" value="1"/>
</dbReference>
<name>ATPG_ALISL</name>
<evidence type="ECO:0000255" key="1">
    <source>
        <dbReference type="HAMAP-Rule" id="MF_00815"/>
    </source>
</evidence>
<accession>B6EHG5</accession>
<keyword id="KW-0066">ATP synthesis</keyword>
<keyword id="KW-0997">Cell inner membrane</keyword>
<keyword id="KW-1003">Cell membrane</keyword>
<keyword id="KW-0139">CF(1)</keyword>
<keyword id="KW-0375">Hydrogen ion transport</keyword>
<keyword id="KW-0406">Ion transport</keyword>
<keyword id="KW-0472">Membrane</keyword>
<keyword id="KW-0813">Transport</keyword>
<feature type="chain" id="PRO_1000134103" description="ATP synthase gamma chain">
    <location>
        <begin position="1"/>
        <end position="288"/>
    </location>
</feature>
<protein>
    <recommendedName>
        <fullName evidence="1">ATP synthase gamma chain</fullName>
    </recommendedName>
    <alternativeName>
        <fullName evidence="1">ATP synthase F1 sector gamma subunit</fullName>
    </alternativeName>
    <alternativeName>
        <fullName evidence="1">F-ATPase gamma subunit</fullName>
    </alternativeName>
</protein>